<name>RS6_COXB1</name>
<proteinExistence type="inferred from homology"/>
<accession>B6J6T7</accession>
<keyword id="KW-0687">Ribonucleoprotein</keyword>
<keyword id="KW-0689">Ribosomal protein</keyword>
<keyword id="KW-0694">RNA-binding</keyword>
<keyword id="KW-0699">rRNA-binding</keyword>
<sequence>MRHYEIVILVHPDQSSQVPAMVERYQSMIKEKGGKVHRLEDWGRRQLAYSIDKVHKAHYLLMNIESDQGVISELENAFRYNDAVIRSLILKRDHAITQSSLIMQGAEKGKSSRKEKVDAEAEASEEA</sequence>
<gene>
    <name evidence="1" type="primary">rpsF</name>
    <name type="ordered locus">CbuK_0731</name>
</gene>
<reference key="1">
    <citation type="journal article" date="2009" name="Infect. Immun.">
        <title>Comparative genomics reveal extensive transposon-mediated genomic plasticity and diversity among potential effector proteins within the genus Coxiella.</title>
        <authorList>
            <person name="Beare P.A."/>
            <person name="Unsworth N."/>
            <person name="Andoh M."/>
            <person name="Voth D.E."/>
            <person name="Omsland A."/>
            <person name="Gilk S.D."/>
            <person name="Williams K.P."/>
            <person name="Sobral B.W."/>
            <person name="Kupko J.J. III"/>
            <person name="Porcella S.F."/>
            <person name="Samuel J.E."/>
            <person name="Heinzen R.A."/>
        </authorList>
    </citation>
    <scope>NUCLEOTIDE SEQUENCE [LARGE SCALE GENOMIC DNA]</scope>
    <source>
        <strain>CbuK_Q154</strain>
    </source>
</reference>
<evidence type="ECO:0000255" key="1">
    <source>
        <dbReference type="HAMAP-Rule" id="MF_00360"/>
    </source>
</evidence>
<evidence type="ECO:0000256" key="2">
    <source>
        <dbReference type="SAM" id="MobiDB-lite"/>
    </source>
</evidence>
<evidence type="ECO:0000305" key="3"/>
<feature type="chain" id="PRO_1000120731" description="Small ribosomal subunit protein bS6">
    <location>
        <begin position="1"/>
        <end position="127"/>
    </location>
</feature>
<feature type="region of interest" description="Disordered" evidence="2">
    <location>
        <begin position="102"/>
        <end position="127"/>
    </location>
</feature>
<feature type="compositionally biased region" description="Basic and acidic residues" evidence="2">
    <location>
        <begin position="107"/>
        <end position="119"/>
    </location>
</feature>
<dbReference type="EMBL" id="CP001020">
    <property type="protein sequence ID" value="ACJ19986.1"/>
    <property type="molecule type" value="Genomic_DNA"/>
</dbReference>
<dbReference type="RefSeq" id="WP_005768823.1">
    <property type="nucleotide sequence ID" value="NC_011528.1"/>
</dbReference>
<dbReference type="SMR" id="B6J6T7"/>
<dbReference type="KEGG" id="cbc:CbuK_0731"/>
<dbReference type="HOGENOM" id="CLU_113441_6_1_6"/>
<dbReference type="GO" id="GO:0022627">
    <property type="term" value="C:cytosolic small ribosomal subunit"/>
    <property type="evidence" value="ECO:0007669"/>
    <property type="project" value="TreeGrafter"/>
</dbReference>
<dbReference type="GO" id="GO:0070181">
    <property type="term" value="F:small ribosomal subunit rRNA binding"/>
    <property type="evidence" value="ECO:0007669"/>
    <property type="project" value="TreeGrafter"/>
</dbReference>
<dbReference type="GO" id="GO:0003735">
    <property type="term" value="F:structural constituent of ribosome"/>
    <property type="evidence" value="ECO:0007669"/>
    <property type="project" value="InterPro"/>
</dbReference>
<dbReference type="GO" id="GO:0006412">
    <property type="term" value="P:translation"/>
    <property type="evidence" value="ECO:0007669"/>
    <property type="project" value="UniProtKB-UniRule"/>
</dbReference>
<dbReference type="CDD" id="cd00473">
    <property type="entry name" value="bS6"/>
    <property type="match status" value="1"/>
</dbReference>
<dbReference type="FunFam" id="3.30.70.60:FF:000003">
    <property type="entry name" value="30S ribosomal protein S6"/>
    <property type="match status" value="1"/>
</dbReference>
<dbReference type="Gene3D" id="3.30.70.60">
    <property type="match status" value="1"/>
</dbReference>
<dbReference type="HAMAP" id="MF_00360">
    <property type="entry name" value="Ribosomal_bS6"/>
    <property type="match status" value="1"/>
</dbReference>
<dbReference type="InterPro" id="IPR000529">
    <property type="entry name" value="Ribosomal_bS6"/>
</dbReference>
<dbReference type="InterPro" id="IPR035980">
    <property type="entry name" value="Ribosomal_bS6_sf"/>
</dbReference>
<dbReference type="InterPro" id="IPR020814">
    <property type="entry name" value="Ribosomal_S6_plastid/chlpt"/>
</dbReference>
<dbReference type="InterPro" id="IPR014717">
    <property type="entry name" value="Transl_elong_EF1B/ribsomal_bS6"/>
</dbReference>
<dbReference type="NCBIfam" id="TIGR00166">
    <property type="entry name" value="S6"/>
    <property type="match status" value="1"/>
</dbReference>
<dbReference type="PANTHER" id="PTHR21011">
    <property type="entry name" value="MITOCHONDRIAL 28S RIBOSOMAL PROTEIN S6"/>
    <property type="match status" value="1"/>
</dbReference>
<dbReference type="PANTHER" id="PTHR21011:SF1">
    <property type="entry name" value="SMALL RIBOSOMAL SUBUNIT PROTEIN BS6M"/>
    <property type="match status" value="1"/>
</dbReference>
<dbReference type="Pfam" id="PF01250">
    <property type="entry name" value="Ribosomal_S6"/>
    <property type="match status" value="1"/>
</dbReference>
<dbReference type="SUPFAM" id="SSF54995">
    <property type="entry name" value="Ribosomal protein S6"/>
    <property type="match status" value="1"/>
</dbReference>
<comment type="function">
    <text evidence="1">Binds together with bS18 to 16S ribosomal RNA.</text>
</comment>
<comment type="similarity">
    <text evidence="1">Belongs to the bacterial ribosomal protein bS6 family.</text>
</comment>
<protein>
    <recommendedName>
        <fullName evidence="1">Small ribosomal subunit protein bS6</fullName>
    </recommendedName>
    <alternativeName>
        <fullName evidence="3">30S ribosomal protein S6</fullName>
    </alternativeName>
</protein>
<organism>
    <name type="scientific">Coxiella burnetii (strain CbuK_Q154)</name>
    <name type="common">Coxiella burnetii (strain Q154)</name>
    <dbReference type="NCBI Taxonomy" id="434924"/>
    <lineage>
        <taxon>Bacteria</taxon>
        <taxon>Pseudomonadati</taxon>
        <taxon>Pseudomonadota</taxon>
        <taxon>Gammaproteobacteria</taxon>
        <taxon>Legionellales</taxon>
        <taxon>Coxiellaceae</taxon>
        <taxon>Coxiella</taxon>
    </lineage>
</organism>